<dbReference type="EC" id="7.6.2.14" evidence="1"/>
<dbReference type="EMBL" id="CP000491">
    <property type="protein sequence ID" value="ABL73064.1"/>
    <property type="molecule type" value="Genomic_DNA"/>
</dbReference>
<dbReference type="RefSeq" id="WP_011751222.1">
    <property type="nucleotide sequence ID" value="NC_008688.1"/>
</dbReference>
<dbReference type="SMR" id="A1BC20"/>
<dbReference type="EnsemblBacteria" id="ABL73064">
    <property type="protein sequence ID" value="ABL73064"/>
    <property type="gene ID" value="Pden_5004"/>
</dbReference>
<dbReference type="GeneID" id="93454426"/>
<dbReference type="KEGG" id="pde:Pden_5004"/>
<dbReference type="eggNOG" id="COG1116">
    <property type="taxonomic scope" value="Bacteria"/>
</dbReference>
<dbReference type="HOGENOM" id="CLU_000604_1_22_5"/>
<dbReference type="OrthoDB" id="9802264at2"/>
<dbReference type="Proteomes" id="UP000000361">
    <property type="component" value="Plasmid pPD1222"/>
</dbReference>
<dbReference type="GO" id="GO:0005886">
    <property type="term" value="C:plasma membrane"/>
    <property type="evidence" value="ECO:0007669"/>
    <property type="project" value="UniProtKB-SubCell"/>
</dbReference>
<dbReference type="GO" id="GO:0005524">
    <property type="term" value="F:ATP binding"/>
    <property type="evidence" value="ECO:0007669"/>
    <property type="project" value="UniProtKB-KW"/>
</dbReference>
<dbReference type="GO" id="GO:0016887">
    <property type="term" value="F:ATP hydrolysis activity"/>
    <property type="evidence" value="ECO:0007669"/>
    <property type="project" value="InterPro"/>
</dbReference>
<dbReference type="Gene3D" id="3.40.50.300">
    <property type="entry name" value="P-loop containing nucleotide triphosphate hydrolases"/>
    <property type="match status" value="1"/>
</dbReference>
<dbReference type="InterPro" id="IPR003593">
    <property type="entry name" value="AAA+_ATPase"/>
</dbReference>
<dbReference type="InterPro" id="IPR003439">
    <property type="entry name" value="ABC_transporter-like_ATP-bd"/>
</dbReference>
<dbReference type="InterPro" id="IPR017871">
    <property type="entry name" value="ABC_transporter-like_CS"/>
</dbReference>
<dbReference type="InterPro" id="IPR050166">
    <property type="entry name" value="ABC_transporter_ATP-bind"/>
</dbReference>
<dbReference type="InterPro" id="IPR027417">
    <property type="entry name" value="P-loop_NTPase"/>
</dbReference>
<dbReference type="PANTHER" id="PTHR42788:SF17">
    <property type="entry name" value="ALIPHATIC SULFONATES IMPORT ATP-BINDING PROTEIN SSUB"/>
    <property type="match status" value="1"/>
</dbReference>
<dbReference type="PANTHER" id="PTHR42788">
    <property type="entry name" value="TAURINE IMPORT ATP-BINDING PROTEIN-RELATED"/>
    <property type="match status" value="1"/>
</dbReference>
<dbReference type="Pfam" id="PF00005">
    <property type="entry name" value="ABC_tran"/>
    <property type="match status" value="1"/>
</dbReference>
<dbReference type="SMART" id="SM00382">
    <property type="entry name" value="AAA"/>
    <property type="match status" value="1"/>
</dbReference>
<dbReference type="SUPFAM" id="SSF52540">
    <property type="entry name" value="P-loop containing nucleoside triphosphate hydrolases"/>
    <property type="match status" value="1"/>
</dbReference>
<dbReference type="PROSITE" id="PS00211">
    <property type="entry name" value="ABC_TRANSPORTER_1"/>
    <property type="match status" value="1"/>
</dbReference>
<dbReference type="PROSITE" id="PS50893">
    <property type="entry name" value="ABC_TRANSPORTER_2"/>
    <property type="match status" value="1"/>
</dbReference>
<dbReference type="PROSITE" id="PS51291">
    <property type="entry name" value="SSUB"/>
    <property type="match status" value="1"/>
</dbReference>
<proteinExistence type="inferred from homology"/>
<accession>A1BC20</accession>
<keyword id="KW-0067">ATP-binding</keyword>
<keyword id="KW-0997">Cell inner membrane</keyword>
<keyword id="KW-1003">Cell membrane</keyword>
<keyword id="KW-0472">Membrane</keyword>
<keyword id="KW-0547">Nucleotide-binding</keyword>
<keyword id="KW-0614">Plasmid</keyword>
<keyword id="KW-1185">Reference proteome</keyword>
<keyword id="KW-1278">Translocase</keyword>
<keyword id="KW-0813">Transport</keyword>
<reference key="1">
    <citation type="submission" date="2006-12" db="EMBL/GenBank/DDBJ databases">
        <title>Complete sequence of plasmid 1 of Paracoccus denitrificans PD1222.</title>
        <authorList>
            <person name="Copeland A."/>
            <person name="Lucas S."/>
            <person name="Lapidus A."/>
            <person name="Barry K."/>
            <person name="Detter J.C."/>
            <person name="Glavina del Rio T."/>
            <person name="Hammon N."/>
            <person name="Israni S."/>
            <person name="Dalin E."/>
            <person name="Tice H."/>
            <person name="Pitluck S."/>
            <person name="Munk A.C."/>
            <person name="Brettin T."/>
            <person name="Bruce D."/>
            <person name="Han C."/>
            <person name="Tapia R."/>
            <person name="Gilna P."/>
            <person name="Schmutz J."/>
            <person name="Larimer F."/>
            <person name="Land M."/>
            <person name="Hauser L."/>
            <person name="Kyrpides N."/>
            <person name="Lykidis A."/>
            <person name="Spiro S."/>
            <person name="Richardson D.J."/>
            <person name="Moir J.W.B."/>
            <person name="Ferguson S.J."/>
            <person name="van Spanning R.J.M."/>
            <person name="Richardson P."/>
        </authorList>
    </citation>
    <scope>NUCLEOTIDE SEQUENCE [LARGE SCALE GENOMIC DNA]</scope>
    <source>
        <strain>Pd 1222</strain>
    </source>
</reference>
<gene>
    <name evidence="1" type="primary">ssuB2</name>
    <name type="ordered locus">Pden_5004</name>
</gene>
<evidence type="ECO:0000255" key="1">
    <source>
        <dbReference type="HAMAP-Rule" id="MF_01724"/>
    </source>
</evidence>
<feature type="chain" id="PRO_0000279926" description="Aliphatic sulfonates import ATP-binding protein SsuB 2">
    <location>
        <begin position="1"/>
        <end position="245"/>
    </location>
</feature>
<feature type="domain" description="ABC transporter" evidence="1">
    <location>
        <begin position="15"/>
        <end position="229"/>
    </location>
</feature>
<feature type="binding site" evidence="1">
    <location>
        <begin position="47"/>
        <end position="54"/>
    </location>
    <ligand>
        <name>ATP</name>
        <dbReference type="ChEBI" id="CHEBI:30616"/>
    </ligand>
</feature>
<comment type="function">
    <text evidence="1">Part of the ABC transporter complex SsuABC involved in aliphatic sulfonates import. Responsible for energy coupling to the transport system.</text>
</comment>
<comment type="catalytic activity">
    <reaction evidence="1">
        <text>ATP + H2O + aliphatic sulfonate-[sulfonate-binding protein]Side 1 = ADP + phosphate + aliphatic sulfonateSide 2 + [sulfonate-binding protein]Side 1.</text>
        <dbReference type="EC" id="7.6.2.14"/>
    </reaction>
</comment>
<comment type="subunit">
    <text evidence="1">The complex is composed of two ATP-binding proteins (SsuB), two transmembrane proteins (SsuC) and a solute-binding protein (SsuA).</text>
</comment>
<comment type="subcellular location">
    <subcellularLocation>
        <location evidence="1">Cell inner membrane</location>
        <topology evidence="1">Peripheral membrane protein</topology>
    </subcellularLocation>
</comment>
<comment type="similarity">
    <text evidence="1">Belongs to the ABC transporter superfamily. Aliphatic sulfonates importer (TC 3.A.1.17.2) family.</text>
</comment>
<geneLocation type="plasmid">
    <name>pPD1222</name>
</geneLocation>
<sequence length="245" mass="26785">MATQLHRSLKTPAAVAVRGLSRAFGPRRVIDNLDLAIRPGEFVALLGASGCGKSTLLRILGDLDPEFEGEVVVPSRRAIAFQAPRLMPWKRVWHNVVLGLPGRPDRKRAERALDEVGIGHRADVWPKVLSGGEAQRAALARALVREPDLLLLDEPFAALDALTRIKAQALVAELWQRHGCAILLVTHDVEEAILLADRVLVMKEGVIAHHEPIALDRPRDVADPEFARIRGALLDWLGVAHGAAH</sequence>
<protein>
    <recommendedName>
        <fullName evidence="1">Aliphatic sulfonates import ATP-binding protein SsuB 2</fullName>
        <ecNumber evidence="1">7.6.2.14</ecNumber>
    </recommendedName>
</protein>
<name>SSUB2_PARDP</name>
<organism>
    <name type="scientific">Paracoccus denitrificans (strain Pd 1222)</name>
    <dbReference type="NCBI Taxonomy" id="318586"/>
    <lineage>
        <taxon>Bacteria</taxon>
        <taxon>Pseudomonadati</taxon>
        <taxon>Pseudomonadota</taxon>
        <taxon>Alphaproteobacteria</taxon>
        <taxon>Rhodobacterales</taxon>
        <taxon>Paracoccaceae</taxon>
        <taxon>Paracoccus</taxon>
    </lineage>
</organism>